<comment type="function">
    <text evidence="2">Oxidative deamination of branched-chain amino acids. The catabolism of valine is the major source of fatty acid precursors for macrolide biosynthesis and a vital source of antibiotic precursors.</text>
</comment>
<comment type="catalytic activity">
    <reaction evidence="2">
        <text>L-valine + NAD(+) + H2O = 3-methyl-2-oxobutanoate + NH4(+) + NADH + H(+)</text>
        <dbReference type="Rhea" id="RHEA:30763"/>
        <dbReference type="ChEBI" id="CHEBI:11851"/>
        <dbReference type="ChEBI" id="CHEBI:15377"/>
        <dbReference type="ChEBI" id="CHEBI:15378"/>
        <dbReference type="ChEBI" id="CHEBI:28938"/>
        <dbReference type="ChEBI" id="CHEBI:57540"/>
        <dbReference type="ChEBI" id="CHEBI:57762"/>
        <dbReference type="ChEBI" id="CHEBI:57945"/>
        <dbReference type="EC" id="1.4.1.23"/>
    </reaction>
</comment>
<comment type="pathway">
    <text evidence="2">Amino-acid degradation; L-valine degradation.</text>
</comment>
<comment type="subunit">
    <text evidence="2">Homodimer.</text>
</comment>
<comment type="subcellular location">
    <subcellularLocation>
        <location evidence="1">Cytoplasm</location>
    </subcellularLocation>
</comment>
<comment type="similarity">
    <text evidence="5">Belongs to the Glu/Leu/Phe/Val dehydrogenases family.</text>
</comment>
<dbReference type="EC" id="1.4.1.23" evidence="2"/>
<dbReference type="EMBL" id="U42212">
    <property type="protein sequence ID" value="AAC44587.1"/>
    <property type="molecule type" value="Genomic_DNA"/>
</dbReference>
<dbReference type="PIR" id="JC5176">
    <property type="entry name" value="JC5176"/>
</dbReference>
<dbReference type="SMR" id="Q53872"/>
<dbReference type="UniPathway" id="UPA00362"/>
<dbReference type="GO" id="GO:0005737">
    <property type="term" value="C:cytoplasm"/>
    <property type="evidence" value="ECO:0007669"/>
    <property type="project" value="UniProtKB-SubCell"/>
</dbReference>
<dbReference type="GO" id="GO:0043837">
    <property type="term" value="F:valine dehydrogenase (NAD+) activity"/>
    <property type="evidence" value="ECO:0007669"/>
    <property type="project" value="UniProtKB-EC"/>
</dbReference>
<dbReference type="GO" id="GO:0006574">
    <property type="term" value="P:valine catabolic process"/>
    <property type="evidence" value="ECO:0007669"/>
    <property type="project" value="UniProtKB-UniPathway"/>
</dbReference>
<dbReference type="CDD" id="cd01075">
    <property type="entry name" value="NAD_bind_Leu_Phe_Val_DH"/>
    <property type="match status" value="1"/>
</dbReference>
<dbReference type="FunFam" id="3.40.50.10860:FF:000010">
    <property type="entry name" value="Leucine dehydrogenase"/>
    <property type="match status" value="1"/>
</dbReference>
<dbReference type="Gene3D" id="3.40.50.10860">
    <property type="entry name" value="Leucine Dehydrogenase, chain A, domain 1"/>
    <property type="match status" value="1"/>
</dbReference>
<dbReference type="Gene3D" id="3.40.50.720">
    <property type="entry name" value="NAD(P)-binding Rossmann-like Domain"/>
    <property type="match status" value="1"/>
</dbReference>
<dbReference type="InterPro" id="IPR046346">
    <property type="entry name" value="Aminoacid_DH-like_N_sf"/>
</dbReference>
<dbReference type="InterPro" id="IPR006095">
    <property type="entry name" value="Glu/Leu/Phe/Val/Trp_DH"/>
</dbReference>
<dbReference type="InterPro" id="IPR006096">
    <property type="entry name" value="Glu/Leu/Phe/Val/Trp_DH_C"/>
</dbReference>
<dbReference type="InterPro" id="IPR006097">
    <property type="entry name" value="Glu/Leu/Phe/Val/Trp_DH_dimer"/>
</dbReference>
<dbReference type="InterPro" id="IPR033524">
    <property type="entry name" value="Glu/Leu/Phe/Val_DH_AS"/>
</dbReference>
<dbReference type="InterPro" id="IPR016211">
    <property type="entry name" value="Glu/Phe/Leu/Val/Trp_DH_bac/arc"/>
</dbReference>
<dbReference type="InterPro" id="IPR036291">
    <property type="entry name" value="NAD(P)-bd_dom_sf"/>
</dbReference>
<dbReference type="PANTHER" id="PTHR42722">
    <property type="entry name" value="LEUCINE DEHYDROGENASE"/>
    <property type="match status" value="1"/>
</dbReference>
<dbReference type="PANTHER" id="PTHR42722:SF1">
    <property type="entry name" value="VALINE DEHYDROGENASE"/>
    <property type="match status" value="1"/>
</dbReference>
<dbReference type="Pfam" id="PF00208">
    <property type="entry name" value="ELFV_dehydrog"/>
    <property type="match status" value="1"/>
</dbReference>
<dbReference type="Pfam" id="PF02812">
    <property type="entry name" value="ELFV_dehydrog_N"/>
    <property type="match status" value="1"/>
</dbReference>
<dbReference type="PIRSF" id="PIRSF000188">
    <property type="entry name" value="Phe_leu_dh"/>
    <property type="match status" value="1"/>
</dbReference>
<dbReference type="PRINTS" id="PR00082">
    <property type="entry name" value="GLFDHDRGNASE"/>
</dbReference>
<dbReference type="SMART" id="SM00839">
    <property type="entry name" value="ELFV_dehydrog"/>
    <property type="match status" value="1"/>
</dbReference>
<dbReference type="SUPFAM" id="SSF53223">
    <property type="entry name" value="Aminoacid dehydrogenase-like, N-terminal domain"/>
    <property type="match status" value="1"/>
</dbReference>
<dbReference type="SUPFAM" id="SSF51735">
    <property type="entry name" value="NAD(P)-binding Rossmann-fold domains"/>
    <property type="match status" value="1"/>
</dbReference>
<dbReference type="PROSITE" id="PS00074">
    <property type="entry name" value="GLFV_DEHYDROGENASE"/>
    <property type="match status" value="1"/>
</dbReference>
<reference key="1">
    <citation type="journal article" date="1996" name="Gene">
        <title>Cloning, sequencing, overexpression in Escherichia coli, and inactivation of the valine dehydrogenase gene in the polyether antibiotic producer Streptomyces cinnamonensis.</title>
        <authorList>
            <person name="Leiser A."/>
            <person name="Birch A."/>
            <person name="Robinson J.A."/>
        </authorList>
    </citation>
    <scope>NUCLEOTIDE SEQUENCE [GENOMIC DNA]</scope>
    <source>
        <strain>A3823.5</strain>
    </source>
</reference>
<protein>
    <recommendedName>
        <fullName evidence="2">Valine dehydrogenase</fullName>
        <shortName>ValDH</shortName>
        <ecNumber evidence="2">1.4.1.23</ecNumber>
    </recommendedName>
</protein>
<accession>Q53872</accession>
<sequence>MTEADNGVLHTLFHSDQGGHEQVVLCQDRASGLKAVIAIHSTALGPALGGTRFYPYATEEEAVADVLNLSRGMSYKNAMAGLDHGGGKAVIIGDPEQIKSEDLLLAFGRFVASLGGRYVTACDVGTYVADMDVVARECRWTTGRSPENGGAGDSSVLTAFGVFQGMRASAEHLWGDPSLRGRKVGVAGVGKVGHHLVEHLLEDGADVVITDVREESVNRSTHKHPSVTAVADTEALIRTEGLDIYAPCALGGALDDDSVPVLTAKVVCGAANNQLAHPGVEKDLADRSILYAPDYVVNAGGVIQVADELRGFDFDRCKAKASKIFDTTLAIFARAKEDGIPPAAAADRIAEQRMSDAR</sequence>
<evidence type="ECO:0000250" key="1"/>
<evidence type="ECO:0000250" key="2">
    <source>
        <dbReference type="UniProtKB" id="Q06539"/>
    </source>
</evidence>
<evidence type="ECO:0000255" key="3"/>
<evidence type="ECO:0000255" key="4">
    <source>
        <dbReference type="PROSITE-ProRule" id="PRU10011"/>
    </source>
</evidence>
<evidence type="ECO:0000305" key="5"/>
<feature type="chain" id="PRO_0000182812" description="Valine dehydrogenase">
    <location>
        <begin position="1"/>
        <end position="358"/>
    </location>
</feature>
<feature type="active site" evidence="4">
    <location>
        <position position="88"/>
    </location>
</feature>
<feature type="binding site" evidence="3">
    <location>
        <begin position="188"/>
        <end position="194"/>
    </location>
    <ligand>
        <name>NAD(+)</name>
        <dbReference type="ChEBI" id="CHEBI:57540"/>
    </ligand>
</feature>
<organism>
    <name type="scientific">Streptomyces virginiae</name>
    <name type="common">Streptomyces cinnamonensis</name>
    <dbReference type="NCBI Taxonomy" id="1961"/>
    <lineage>
        <taxon>Bacteria</taxon>
        <taxon>Bacillati</taxon>
        <taxon>Actinomycetota</taxon>
        <taxon>Actinomycetes</taxon>
        <taxon>Kitasatosporales</taxon>
        <taxon>Streptomycetaceae</taxon>
        <taxon>Streptomyces</taxon>
    </lineage>
</organism>
<name>VDH_STRVG</name>
<gene>
    <name type="primary">vdh</name>
</gene>
<keyword id="KW-0101">Branched-chain amino acid catabolism</keyword>
<keyword id="KW-0963">Cytoplasm</keyword>
<keyword id="KW-0520">NAD</keyword>
<keyword id="KW-0560">Oxidoreductase</keyword>
<proteinExistence type="inferred from homology"/>